<organism>
    <name type="scientific">Cereibacter sphaeroides (strain ATCC 17023 / DSM 158 / JCM 6121 / CCUG 31486 / LMG 2827 / NBRC 12203 / NCIMB 8253 / ATH 2.4.1.)</name>
    <name type="common">Rhodobacter sphaeroides</name>
    <dbReference type="NCBI Taxonomy" id="272943"/>
    <lineage>
        <taxon>Bacteria</taxon>
        <taxon>Pseudomonadati</taxon>
        <taxon>Pseudomonadota</taxon>
        <taxon>Alphaproteobacteria</taxon>
        <taxon>Rhodobacterales</taxon>
        <taxon>Paracoccaceae</taxon>
        <taxon>Cereibacter</taxon>
    </lineage>
</organism>
<sequence>MARTSAIDYGRAAKYFLLLDFIKGFGLGMKYFFAPKHTVNYPHEKGPLSPRFRGEHALRRYPNGEERCIACKLCEAVCPAQAITIDAEPREDGSRRTTRYDIDMTKCIYCGFCQEACPVDAIVEGPNFEFSTETREELFYNKDRLLENGARWEAEIARNLELDAPYR</sequence>
<reference key="1">
    <citation type="submission" date="2005-09" db="EMBL/GenBank/DDBJ databases">
        <title>Complete sequence of chromosome 1 of Rhodobacter sphaeroides 2.4.1.</title>
        <authorList>
            <person name="Copeland A."/>
            <person name="Lucas S."/>
            <person name="Lapidus A."/>
            <person name="Barry K."/>
            <person name="Detter J.C."/>
            <person name="Glavina T."/>
            <person name="Hammon N."/>
            <person name="Israni S."/>
            <person name="Pitluck S."/>
            <person name="Richardson P."/>
            <person name="Mackenzie C."/>
            <person name="Choudhary M."/>
            <person name="Larimer F."/>
            <person name="Hauser L.J."/>
            <person name="Land M."/>
            <person name="Donohue T.J."/>
            <person name="Kaplan S."/>
        </authorList>
    </citation>
    <scope>NUCLEOTIDE SEQUENCE [LARGE SCALE GENOMIC DNA]</scope>
    <source>
        <strain>ATCC 17023 / DSM 158 / JCM 6121 / CCUG 31486 / LMG 2827 / NBRC 12203 / NCIMB 8253 / ATH 2.4.1.</strain>
    </source>
</reference>
<dbReference type="EC" id="7.1.1.-" evidence="1"/>
<dbReference type="EMBL" id="CP000143">
    <property type="protein sequence ID" value="ABA78684.1"/>
    <property type="molecule type" value="Genomic_DNA"/>
</dbReference>
<dbReference type="RefSeq" id="YP_352585.1">
    <property type="nucleotide sequence ID" value="NC_007493.2"/>
</dbReference>
<dbReference type="SMR" id="Q3J3F0"/>
<dbReference type="STRING" id="272943.RSP_2523"/>
<dbReference type="EnsemblBacteria" id="ABA78684">
    <property type="protein sequence ID" value="ABA78684"/>
    <property type="gene ID" value="RSP_2523"/>
</dbReference>
<dbReference type="KEGG" id="rsp:RSP_2523"/>
<dbReference type="PATRIC" id="fig|272943.9.peg.1444"/>
<dbReference type="eggNOG" id="COG1143">
    <property type="taxonomic scope" value="Bacteria"/>
</dbReference>
<dbReference type="OrthoDB" id="9808559at2"/>
<dbReference type="PhylomeDB" id="Q3J3F0"/>
<dbReference type="Proteomes" id="UP000002703">
    <property type="component" value="Chromosome 1"/>
</dbReference>
<dbReference type="GO" id="GO:0005886">
    <property type="term" value="C:plasma membrane"/>
    <property type="evidence" value="ECO:0007669"/>
    <property type="project" value="UniProtKB-SubCell"/>
</dbReference>
<dbReference type="GO" id="GO:0051539">
    <property type="term" value="F:4 iron, 4 sulfur cluster binding"/>
    <property type="evidence" value="ECO:0007669"/>
    <property type="project" value="UniProtKB-KW"/>
</dbReference>
<dbReference type="GO" id="GO:0005506">
    <property type="term" value="F:iron ion binding"/>
    <property type="evidence" value="ECO:0007669"/>
    <property type="project" value="UniProtKB-UniRule"/>
</dbReference>
<dbReference type="GO" id="GO:0050136">
    <property type="term" value="F:NADH:ubiquinone reductase (non-electrogenic) activity"/>
    <property type="evidence" value="ECO:0007669"/>
    <property type="project" value="UniProtKB-UniRule"/>
</dbReference>
<dbReference type="GO" id="GO:0048038">
    <property type="term" value="F:quinone binding"/>
    <property type="evidence" value="ECO:0007669"/>
    <property type="project" value="UniProtKB-KW"/>
</dbReference>
<dbReference type="GO" id="GO:0009060">
    <property type="term" value="P:aerobic respiration"/>
    <property type="evidence" value="ECO:0007669"/>
    <property type="project" value="TreeGrafter"/>
</dbReference>
<dbReference type="FunFam" id="3.30.70.3270:FF:000001">
    <property type="entry name" value="NADH-quinone oxidoreductase subunit I 1"/>
    <property type="match status" value="1"/>
</dbReference>
<dbReference type="Gene3D" id="3.30.70.3270">
    <property type="match status" value="1"/>
</dbReference>
<dbReference type="HAMAP" id="MF_01351">
    <property type="entry name" value="NDH1_NuoI"/>
    <property type="match status" value="1"/>
</dbReference>
<dbReference type="InterPro" id="IPR017896">
    <property type="entry name" value="4Fe4S_Fe-S-bd"/>
</dbReference>
<dbReference type="InterPro" id="IPR017900">
    <property type="entry name" value="4Fe4S_Fe_S_CS"/>
</dbReference>
<dbReference type="InterPro" id="IPR010226">
    <property type="entry name" value="NADH_quinone_OxRdtase_chainI"/>
</dbReference>
<dbReference type="NCBIfam" id="TIGR01971">
    <property type="entry name" value="NuoI"/>
    <property type="match status" value="1"/>
</dbReference>
<dbReference type="NCBIfam" id="NF004538">
    <property type="entry name" value="PRK05888.1-4"/>
    <property type="match status" value="1"/>
</dbReference>
<dbReference type="NCBIfam" id="NF004539">
    <property type="entry name" value="PRK05888.1-5"/>
    <property type="match status" value="1"/>
</dbReference>
<dbReference type="PANTHER" id="PTHR10849:SF20">
    <property type="entry name" value="NADH DEHYDROGENASE [UBIQUINONE] IRON-SULFUR PROTEIN 8, MITOCHONDRIAL"/>
    <property type="match status" value="1"/>
</dbReference>
<dbReference type="PANTHER" id="PTHR10849">
    <property type="entry name" value="NADH DEHYDROGENASE UBIQUINONE IRON-SULFUR PROTEIN 8, MITOCHONDRIAL"/>
    <property type="match status" value="1"/>
</dbReference>
<dbReference type="Pfam" id="PF12838">
    <property type="entry name" value="Fer4_7"/>
    <property type="match status" value="1"/>
</dbReference>
<dbReference type="SUPFAM" id="SSF54862">
    <property type="entry name" value="4Fe-4S ferredoxins"/>
    <property type="match status" value="1"/>
</dbReference>
<dbReference type="PROSITE" id="PS00198">
    <property type="entry name" value="4FE4S_FER_1"/>
    <property type="match status" value="2"/>
</dbReference>
<dbReference type="PROSITE" id="PS51379">
    <property type="entry name" value="4FE4S_FER_2"/>
    <property type="match status" value="2"/>
</dbReference>
<keyword id="KW-0004">4Fe-4S</keyword>
<keyword id="KW-0997">Cell inner membrane</keyword>
<keyword id="KW-1003">Cell membrane</keyword>
<keyword id="KW-0408">Iron</keyword>
<keyword id="KW-0411">Iron-sulfur</keyword>
<keyword id="KW-0472">Membrane</keyword>
<keyword id="KW-0479">Metal-binding</keyword>
<keyword id="KW-0520">NAD</keyword>
<keyword id="KW-0874">Quinone</keyword>
<keyword id="KW-1185">Reference proteome</keyword>
<keyword id="KW-0677">Repeat</keyword>
<keyword id="KW-1278">Translocase</keyword>
<keyword id="KW-0830">Ubiquinone</keyword>
<comment type="function">
    <text evidence="1">NDH-1 shuttles electrons from NADH, via FMN and iron-sulfur (Fe-S) centers, to quinones in the respiratory chain. The immediate electron acceptor for the enzyme in this species is believed to be ubiquinone. Couples the redox reaction to proton translocation (for every two electrons transferred, four hydrogen ions are translocated across the cytoplasmic membrane), and thus conserves the redox energy in a proton gradient.</text>
</comment>
<comment type="catalytic activity">
    <reaction evidence="1">
        <text>a quinone + NADH + 5 H(+)(in) = a quinol + NAD(+) + 4 H(+)(out)</text>
        <dbReference type="Rhea" id="RHEA:57888"/>
        <dbReference type="ChEBI" id="CHEBI:15378"/>
        <dbReference type="ChEBI" id="CHEBI:24646"/>
        <dbReference type="ChEBI" id="CHEBI:57540"/>
        <dbReference type="ChEBI" id="CHEBI:57945"/>
        <dbReference type="ChEBI" id="CHEBI:132124"/>
    </reaction>
</comment>
<comment type="cofactor">
    <cofactor evidence="1">
        <name>[4Fe-4S] cluster</name>
        <dbReference type="ChEBI" id="CHEBI:49883"/>
    </cofactor>
    <text evidence="1">Binds 2 [4Fe-4S] clusters per subunit.</text>
</comment>
<comment type="subunit">
    <text evidence="1">NDH-1 is composed of 14 different subunits. Subunits NuoA, H, J, K, L, M, N constitute the membrane sector of the complex.</text>
</comment>
<comment type="subcellular location">
    <subcellularLocation>
        <location evidence="1">Cell inner membrane</location>
        <topology evidence="1">Peripheral membrane protein</topology>
    </subcellularLocation>
</comment>
<comment type="similarity">
    <text evidence="1">Belongs to the complex I 23 kDa subunit family.</text>
</comment>
<name>NUOI1_CERS4</name>
<accession>Q3J3F0</accession>
<proteinExistence type="inferred from homology"/>
<protein>
    <recommendedName>
        <fullName evidence="1">NADH-quinone oxidoreductase subunit I 1</fullName>
        <ecNumber evidence="1">7.1.1.-</ecNumber>
    </recommendedName>
    <alternativeName>
        <fullName evidence="1">NADH dehydrogenase I subunit I 1</fullName>
    </alternativeName>
    <alternativeName>
        <fullName evidence="1">NDH-1 subunit I 1</fullName>
    </alternativeName>
</protein>
<feature type="chain" id="PRO_0000250934" description="NADH-quinone oxidoreductase subunit I 1">
    <location>
        <begin position="1"/>
        <end position="167"/>
    </location>
</feature>
<feature type="domain" description="4Fe-4S ferredoxin-type 1" evidence="1">
    <location>
        <begin position="58"/>
        <end position="88"/>
    </location>
</feature>
<feature type="domain" description="4Fe-4S ferredoxin-type 2" evidence="1">
    <location>
        <begin position="98"/>
        <end position="127"/>
    </location>
</feature>
<feature type="binding site" evidence="1">
    <location>
        <position position="68"/>
    </location>
    <ligand>
        <name>[4Fe-4S] cluster</name>
        <dbReference type="ChEBI" id="CHEBI:49883"/>
        <label>1</label>
    </ligand>
</feature>
<feature type="binding site" evidence="1">
    <location>
        <position position="71"/>
    </location>
    <ligand>
        <name>[4Fe-4S] cluster</name>
        <dbReference type="ChEBI" id="CHEBI:49883"/>
        <label>1</label>
    </ligand>
</feature>
<feature type="binding site" evidence="1">
    <location>
        <position position="74"/>
    </location>
    <ligand>
        <name>[4Fe-4S] cluster</name>
        <dbReference type="ChEBI" id="CHEBI:49883"/>
        <label>1</label>
    </ligand>
</feature>
<feature type="binding site" evidence="1">
    <location>
        <position position="78"/>
    </location>
    <ligand>
        <name>[4Fe-4S] cluster</name>
        <dbReference type="ChEBI" id="CHEBI:49883"/>
        <label>2</label>
    </ligand>
</feature>
<feature type="binding site" evidence="1">
    <location>
        <position position="107"/>
    </location>
    <ligand>
        <name>[4Fe-4S] cluster</name>
        <dbReference type="ChEBI" id="CHEBI:49883"/>
        <label>2</label>
    </ligand>
</feature>
<feature type="binding site" evidence="1">
    <location>
        <position position="110"/>
    </location>
    <ligand>
        <name>[4Fe-4S] cluster</name>
        <dbReference type="ChEBI" id="CHEBI:49883"/>
        <label>2</label>
    </ligand>
</feature>
<feature type="binding site" evidence="1">
    <location>
        <position position="113"/>
    </location>
    <ligand>
        <name>[4Fe-4S] cluster</name>
        <dbReference type="ChEBI" id="CHEBI:49883"/>
        <label>2</label>
    </ligand>
</feature>
<feature type="binding site" evidence="1">
    <location>
        <position position="117"/>
    </location>
    <ligand>
        <name>[4Fe-4S] cluster</name>
        <dbReference type="ChEBI" id="CHEBI:49883"/>
        <label>1</label>
    </ligand>
</feature>
<gene>
    <name evidence="1" type="primary">nuoI1</name>
    <name type="ordered locus">RHOS4_11160</name>
    <name type="ORF">RSP_2523</name>
</gene>
<evidence type="ECO:0000255" key="1">
    <source>
        <dbReference type="HAMAP-Rule" id="MF_01351"/>
    </source>
</evidence>